<sequence>MASFATHLVVVVTMLFVAMASAEMLQDVCVADLSNAVKVNGYTCKDSTQITPEDFYFKGLANIAATNTSTGSVVTGANVEKLPGLNTLGLSMSRIDYAPNGLNPPHVHPRASEIIFVLEGQLYVGFVTTAGKLIAKNLNKGDVFTFPKGLIHFQKNIANSPASVLAAFDSQLPGTQSLVASLFGALPDDILAKSFQLKHKQVKKIKLRYAPKK</sequence>
<comment type="function">
    <text>May play a role in plant defense. Probably has no oxalate oxidase activity even if the active site is conserved.</text>
</comment>
<comment type="subunit">
    <text evidence="1">Oligomer (believed to be a pentamer but probably hexamer).</text>
</comment>
<comment type="subcellular location">
    <subcellularLocation>
        <location evidence="1">Secreted</location>
        <location evidence="1">Extracellular space</location>
        <location evidence="1">Apoplast</location>
    </subcellularLocation>
</comment>
<comment type="similarity">
    <text evidence="3">Belongs to the germin family.</text>
</comment>
<comment type="sequence caution" evidence="3">
    <conflict type="erroneous gene model prediction">
        <sequence resource="EMBL-CDS" id="AAC13591"/>
    </conflict>
</comment>
<dbReference type="EMBL" id="AF058914">
    <property type="protein sequence ID" value="AAC13591.1"/>
    <property type="status" value="ALT_SEQ"/>
    <property type="molecule type" value="Genomic_DNA"/>
</dbReference>
<dbReference type="EMBL" id="CP002688">
    <property type="protein sequence ID" value="AED93574.1"/>
    <property type="molecule type" value="Genomic_DNA"/>
</dbReference>
<dbReference type="EMBL" id="BT005231">
    <property type="protein sequence ID" value="AAO63295.1"/>
    <property type="molecule type" value="mRNA"/>
</dbReference>
<dbReference type="PIR" id="T01199">
    <property type="entry name" value="T01199"/>
</dbReference>
<dbReference type="RefSeq" id="NP_850875.1">
    <property type="nucleotide sequence ID" value="NM_180544.2"/>
</dbReference>
<dbReference type="SMR" id="O65252"/>
<dbReference type="FunCoup" id="O65252">
    <property type="interactions" value="27"/>
</dbReference>
<dbReference type="GlyGen" id="O65252">
    <property type="glycosylation" value="1 site"/>
</dbReference>
<dbReference type="PaxDb" id="3702-AT5G26700.1"/>
<dbReference type="ProteomicsDB" id="230487"/>
<dbReference type="EnsemblPlants" id="AT5G26700.1">
    <property type="protein sequence ID" value="AT5G26700.1"/>
    <property type="gene ID" value="AT5G26700"/>
</dbReference>
<dbReference type="GeneID" id="832719"/>
<dbReference type="Gramene" id="AT5G26700.1">
    <property type="protein sequence ID" value="AT5G26700.1"/>
    <property type="gene ID" value="AT5G26700"/>
</dbReference>
<dbReference type="KEGG" id="ath:AT5G26700"/>
<dbReference type="Araport" id="AT5G26700"/>
<dbReference type="TAIR" id="AT5G26700"/>
<dbReference type="eggNOG" id="ENOG502QQ4A">
    <property type="taxonomic scope" value="Eukaryota"/>
</dbReference>
<dbReference type="HOGENOM" id="CLU_015790_0_3_1"/>
<dbReference type="InParanoid" id="O65252"/>
<dbReference type="OMA" id="CKDSTQI"/>
<dbReference type="PhylomeDB" id="O65252"/>
<dbReference type="PRO" id="PR:O65252"/>
<dbReference type="Proteomes" id="UP000006548">
    <property type="component" value="Chromosome 5"/>
</dbReference>
<dbReference type="ExpressionAtlas" id="O65252">
    <property type="expression patterns" value="baseline and differential"/>
</dbReference>
<dbReference type="GO" id="GO:0048046">
    <property type="term" value="C:apoplast"/>
    <property type="evidence" value="ECO:0007669"/>
    <property type="project" value="UniProtKB-SubCell"/>
</dbReference>
<dbReference type="GO" id="GO:0030145">
    <property type="term" value="F:manganese ion binding"/>
    <property type="evidence" value="ECO:0007669"/>
    <property type="project" value="InterPro"/>
</dbReference>
<dbReference type="CDD" id="cd02241">
    <property type="entry name" value="cupin_OxOx"/>
    <property type="match status" value="1"/>
</dbReference>
<dbReference type="FunFam" id="2.60.120.10:FF:000025">
    <property type="entry name" value="germin-like protein subfamily 2 member 1"/>
    <property type="match status" value="1"/>
</dbReference>
<dbReference type="Gene3D" id="2.60.120.10">
    <property type="entry name" value="Jelly Rolls"/>
    <property type="match status" value="1"/>
</dbReference>
<dbReference type="InterPro" id="IPR006045">
    <property type="entry name" value="Cupin_1"/>
</dbReference>
<dbReference type="InterPro" id="IPR001929">
    <property type="entry name" value="Germin"/>
</dbReference>
<dbReference type="InterPro" id="IPR019780">
    <property type="entry name" value="Germin_Mn-BS"/>
</dbReference>
<dbReference type="InterPro" id="IPR014710">
    <property type="entry name" value="RmlC-like_jellyroll"/>
</dbReference>
<dbReference type="InterPro" id="IPR011051">
    <property type="entry name" value="RmlC_Cupin_sf"/>
</dbReference>
<dbReference type="PANTHER" id="PTHR31238">
    <property type="entry name" value="GERMIN-LIKE PROTEIN SUBFAMILY 3 MEMBER 3"/>
    <property type="match status" value="1"/>
</dbReference>
<dbReference type="Pfam" id="PF00190">
    <property type="entry name" value="Cupin_1"/>
    <property type="match status" value="1"/>
</dbReference>
<dbReference type="PRINTS" id="PR00325">
    <property type="entry name" value="GERMIN"/>
</dbReference>
<dbReference type="SMART" id="SM00835">
    <property type="entry name" value="Cupin_1"/>
    <property type="match status" value="1"/>
</dbReference>
<dbReference type="SUPFAM" id="SSF51182">
    <property type="entry name" value="RmlC-like cupins"/>
    <property type="match status" value="1"/>
</dbReference>
<dbReference type="PROSITE" id="PS00725">
    <property type="entry name" value="GERMIN"/>
    <property type="match status" value="1"/>
</dbReference>
<feature type="signal peptide" evidence="2">
    <location>
        <begin position="1"/>
        <end position="22"/>
    </location>
</feature>
<feature type="chain" id="PRO_0000010825" description="Probable germin-like protein subfamily 2 member 5">
    <location>
        <begin position="23"/>
        <end position="213"/>
    </location>
</feature>
<feature type="domain" description="Cupin type-1" evidence="2">
    <location>
        <begin position="58"/>
        <end position="203"/>
    </location>
</feature>
<feature type="binding site" evidence="1">
    <location>
        <position position="106"/>
    </location>
    <ligand>
        <name>Mn(2+)</name>
        <dbReference type="ChEBI" id="CHEBI:29035"/>
    </ligand>
</feature>
<feature type="binding site" evidence="1">
    <location>
        <position position="108"/>
    </location>
    <ligand>
        <name>Mn(2+)</name>
        <dbReference type="ChEBI" id="CHEBI:29035"/>
    </ligand>
</feature>
<feature type="binding site" evidence="1">
    <location>
        <position position="113"/>
    </location>
    <ligand>
        <name>Mn(2+)</name>
        <dbReference type="ChEBI" id="CHEBI:29035"/>
    </ligand>
</feature>
<feature type="binding site" evidence="1">
    <location>
        <position position="152"/>
    </location>
    <ligand>
        <name>Mn(2+)</name>
        <dbReference type="ChEBI" id="CHEBI:29035"/>
    </ligand>
</feature>
<feature type="glycosylation site" description="N-linked (GlcNAc...) asparagine" evidence="2">
    <location>
        <position position="67"/>
    </location>
</feature>
<feature type="disulfide bond" evidence="1">
    <location>
        <begin position="29"/>
        <end position="44"/>
    </location>
</feature>
<gene>
    <name type="ordered locus">At5g26700</name>
    <name type="ORF">F21E10.2</name>
</gene>
<accession>O65252</accession>
<proteinExistence type="evidence at transcript level"/>
<keyword id="KW-0052">Apoplast</keyword>
<keyword id="KW-1015">Disulfide bond</keyword>
<keyword id="KW-0325">Glycoprotein</keyword>
<keyword id="KW-0464">Manganese</keyword>
<keyword id="KW-0479">Metal-binding</keyword>
<keyword id="KW-1185">Reference proteome</keyword>
<keyword id="KW-0964">Secreted</keyword>
<keyword id="KW-0732">Signal</keyword>
<evidence type="ECO:0000250" key="1"/>
<evidence type="ECO:0000255" key="2"/>
<evidence type="ECO:0000305" key="3"/>
<reference key="1">
    <citation type="journal article" date="2000" name="Nature">
        <title>Sequence and analysis of chromosome 5 of the plant Arabidopsis thaliana.</title>
        <authorList>
            <person name="Tabata S."/>
            <person name="Kaneko T."/>
            <person name="Nakamura Y."/>
            <person name="Kotani H."/>
            <person name="Kato T."/>
            <person name="Asamizu E."/>
            <person name="Miyajima N."/>
            <person name="Sasamoto S."/>
            <person name="Kimura T."/>
            <person name="Hosouchi T."/>
            <person name="Kawashima K."/>
            <person name="Kohara M."/>
            <person name="Matsumoto M."/>
            <person name="Matsuno A."/>
            <person name="Muraki A."/>
            <person name="Nakayama S."/>
            <person name="Nakazaki N."/>
            <person name="Naruo K."/>
            <person name="Okumura S."/>
            <person name="Shinpo S."/>
            <person name="Takeuchi C."/>
            <person name="Wada T."/>
            <person name="Watanabe A."/>
            <person name="Yamada M."/>
            <person name="Yasuda M."/>
            <person name="Sato S."/>
            <person name="de la Bastide M."/>
            <person name="Huang E."/>
            <person name="Spiegel L."/>
            <person name="Gnoj L."/>
            <person name="O'Shaughnessy A."/>
            <person name="Preston R."/>
            <person name="Habermann K."/>
            <person name="Murray J."/>
            <person name="Johnson D."/>
            <person name="Rohlfing T."/>
            <person name="Nelson J."/>
            <person name="Stoneking T."/>
            <person name="Pepin K."/>
            <person name="Spieth J."/>
            <person name="Sekhon M."/>
            <person name="Armstrong J."/>
            <person name="Becker M."/>
            <person name="Belter E."/>
            <person name="Cordum H."/>
            <person name="Cordes M."/>
            <person name="Courtney L."/>
            <person name="Courtney W."/>
            <person name="Dante M."/>
            <person name="Du H."/>
            <person name="Edwards J."/>
            <person name="Fryman J."/>
            <person name="Haakensen B."/>
            <person name="Lamar E."/>
            <person name="Latreille P."/>
            <person name="Leonard S."/>
            <person name="Meyer R."/>
            <person name="Mulvaney E."/>
            <person name="Ozersky P."/>
            <person name="Riley A."/>
            <person name="Strowmatt C."/>
            <person name="Wagner-McPherson C."/>
            <person name="Wollam A."/>
            <person name="Yoakum M."/>
            <person name="Bell M."/>
            <person name="Dedhia N."/>
            <person name="Parnell L."/>
            <person name="Shah R."/>
            <person name="Rodriguez M."/>
            <person name="Hoon See L."/>
            <person name="Vil D."/>
            <person name="Baker J."/>
            <person name="Kirchoff K."/>
            <person name="Toth K."/>
            <person name="King L."/>
            <person name="Bahret A."/>
            <person name="Miller B."/>
            <person name="Marra M.A."/>
            <person name="Martienssen R."/>
            <person name="McCombie W.R."/>
            <person name="Wilson R.K."/>
            <person name="Murphy G."/>
            <person name="Bancroft I."/>
            <person name="Volckaert G."/>
            <person name="Wambutt R."/>
            <person name="Duesterhoeft A."/>
            <person name="Stiekema W."/>
            <person name="Pohl T."/>
            <person name="Entian K.-D."/>
            <person name="Terryn N."/>
            <person name="Hartley N."/>
            <person name="Bent E."/>
            <person name="Johnson S."/>
            <person name="Langham S.-A."/>
            <person name="McCullagh B."/>
            <person name="Robben J."/>
            <person name="Grymonprez B."/>
            <person name="Zimmermann W."/>
            <person name="Ramsperger U."/>
            <person name="Wedler H."/>
            <person name="Balke K."/>
            <person name="Wedler E."/>
            <person name="Peters S."/>
            <person name="van Staveren M."/>
            <person name="Dirkse W."/>
            <person name="Mooijman P."/>
            <person name="Klein Lankhorst R."/>
            <person name="Weitzenegger T."/>
            <person name="Bothe G."/>
            <person name="Rose M."/>
            <person name="Hauf J."/>
            <person name="Berneiser S."/>
            <person name="Hempel S."/>
            <person name="Feldpausch M."/>
            <person name="Lamberth S."/>
            <person name="Villarroel R."/>
            <person name="Gielen J."/>
            <person name="Ardiles W."/>
            <person name="Bents O."/>
            <person name="Lemcke K."/>
            <person name="Kolesov G."/>
            <person name="Mayer K.F.X."/>
            <person name="Rudd S."/>
            <person name="Schoof H."/>
            <person name="Schueller C."/>
            <person name="Zaccaria P."/>
            <person name="Mewes H.-W."/>
            <person name="Bevan M."/>
            <person name="Fransz P.F."/>
        </authorList>
    </citation>
    <scope>NUCLEOTIDE SEQUENCE [LARGE SCALE GENOMIC DNA]</scope>
    <source>
        <strain>cv. Columbia</strain>
    </source>
</reference>
<reference key="2">
    <citation type="journal article" date="2017" name="Plant J.">
        <title>Araport11: a complete reannotation of the Arabidopsis thaliana reference genome.</title>
        <authorList>
            <person name="Cheng C.Y."/>
            <person name="Krishnakumar V."/>
            <person name="Chan A.P."/>
            <person name="Thibaud-Nissen F."/>
            <person name="Schobel S."/>
            <person name="Town C.D."/>
        </authorList>
    </citation>
    <scope>GENOME REANNOTATION</scope>
    <source>
        <strain>cv. Columbia</strain>
    </source>
</reference>
<reference key="3">
    <citation type="journal article" date="2003" name="Science">
        <title>Empirical analysis of transcriptional activity in the Arabidopsis genome.</title>
        <authorList>
            <person name="Yamada K."/>
            <person name="Lim J."/>
            <person name="Dale J.M."/>
            <person name="Chen H."/>
            <person name="Shinn P."/>
            <person name="Palm C.J."/>
            <person name="Southwick A.M."/>
            <person name="Wu H.C."/>
            <person name="Kim C.J."/>
            <person name="Nguyen M."/>
            <person name="Pham P.K."/>
            <person name="Cheuk R.F."/>
            <person name="Karlin-Newmann G."/>
            <person name="Liu S.X."/>
            <person name="Lam B."/>
            <person name="Sakano H."/>
            <person name="Wu T."/>
            <person name="Yu G."/>
            <person name="Miranda M."/>
            <person name="Quach H.L."/>
            <person name="Tripp M."/>
            <person name="Chang C.H."/>
            <person name="Lee J.M."/>
            <person name="Toriumi M.J."/>
            <person name="Chan M.M."/>
            <person name="Tang C.C."/>
            <person name="Onodera C.S."/>
            <person name="Deng J.M."/>
            <person name="Akiyama K."/>
            <person name="Ansari Y."/>
            <person name="Arakawa T."/>
            <person name="Banh J."/>
            <person name="Banno F."/>
            <person name="Bowser L."/>
            <person name="Brooks S.Y."/>
            <person name="Carninci P."/>
            <person name="Chao Q."/>
            <person name="Choy N."/>
            <person name="Enju A."/>
            <person name="Goldsmith A.D."/>
            <person name="Gurjal M."/>
            <person name="Hansen N.F."/>
            <person name="Hayashizaki Y."/>
            <person name="Johnson-Hopson C."/>
            <person name="Hsuan V.W."/>
            <person name="Iida K."/>
            <person name="Karnes M."/>
            <person name="Khan S."/>
            <person name="Koesema E."/>
            <person name="Ishida J."/>
            <person name="Jiang P.X."/>
            <person name="Jones T."/>
            <person name="Kawai J."/>
            <person name="Kamiya A."/>
            <person name="Meyers C."/>
            <person name="Nakajima M."/>
            <person name="Narusaka M."/>
            <person name="Seki M."/>
            <person name="Sakurai T."/>
            <person name="Satou M."/>
            <person name="Tamse R."/>
            <person name="Vaysberg M."/>
            <person name="Wallender E.K."/>
            <person name="Wong C."/>
            <person name="Yamamura Y."/>
            <person name="Yuan S."/>
            <person name="Shinozaki K."/>
            <person name="Davis R.W."/>
            <person name="Theologis A."/>
            <person name="Ecker J.R."/>
        </authorList>
    </citation>
    <scope>NUCLEOTIDE SEQUENCE [LARGE SCALE MRNA]</scope>
    <source>
        <strain>cv. Columbia</strain>
    </source>
</reference>
<name>GL25_ARATH</name>
<organism>
    <name type="scientific">Arabidopsis thaliana</name>
    <name type="common">Mouse-ear cress</name>
    <dbReference type="NCBI Taxonomy" id="3702"/>
    <lineage>
        <taxon>Eukaryota</taxon>
        <taxon>Viridiplantae</taxon>
        <taxon>Streptophyta</taxon>
        <taxon>Embryophyta</taxon>
        <taxon>Tracheophyta</taxon>
        <taxon>Spermatophyta</taxon>
        <taxon>Magnoliopsida</taxon>
        <taxon>eudicotyledons</taxon>
        <taxon>Gunneridae</taxon>
        <taxon>Pentapetalae</taxon>
        <taxon>rosids</taxon>
        <taxon>malvids</taxon>
        <taxon>Brassicales</taxon>
        <taxon>Brassicaceae</taxon>
        <taxon>Camelineae</taxon>
        <taxon>Arabidopsis</taxon>
    </lineage>
</organism>
<protein>
    <recommendedName>
        <fullName>Probable germin-like protein subfamily 2 member 5</fullName>
    </recommendedName>
</protein>